<organism>
    <name type="scientific">Trichormus variabilis (strain ATCC 29413 / PCC 7937)</name>
    <name type="common">Anabaena variabilis</name>
    <dbReference type="NCBI Taxonomy" id="240292"/>
    <lineage>
        <taxon>Bacteria</taxon>
        <taxon>Bacillati</taxon>
        <taxon>Cyanobacteriota</taxon>
        <taxon>Cyanophyceae</taxon>
        <taxon>Nostocales</taxon>
        <taxon>Nostocaceae</taxon>
        <taxon>Trichormus</taxon>
    </lineage>
</organism>
<evidence type="ECO:0000255" key="1">
    <source>
        <dbReference type="HAMAP-Rule" id="MF_01357"/>
    </source>
</evidence>
<evidence type="ECO:0000305" key="2"/>
<keyword id="KW-0472">Membrane</keyword>
<keyword id="KW-0520">NAD</keyword>
<keyword id="KW-0521">NADP</keyword>
<keyword id="KW-0618">Plastoquinone</keyword>
<keyword id="KW-0874">Quinone</keyword>
<keyword id="KW-0793">Thylakoid</keyword>
<keyword id="KW-1278">Translocase</keyword>
<keyword id="KW-0813">Transport</keyword>
<dbReference type="EC" id="7.1.1.-" evidence="1"/>
<dbReference type="EMBL" id="AJ012181">
    <property type="protein sequence ID" value="CAB45648.1"/>
    <property type="molecule type" value="Genomic_DNA"/>
</dbReference>
<dbReference type="EMBL" id="CP000117">
    <property type="protein sequence ID" value="ABA21482.1"/>
    <property type="molecule type" value="Genomic_DNA"/>
</dbReference>
<dbReference type="SMR" id="Q9XBL6"/>
<dbReference type="STRING" id="240292.Ava_1860"/>
<dbReference type="KEGG" id="ava:Ava_1860"/>
<dbReference type="eggNOG" id="COG0852">
    <property type="taxonomic scope" value="Bacteria"/>
</dbReference>
<dbReference type="HOGENOM" id="CLU_042628_9_1_3"/>
<dbReference type="Proteomes" id="UP000002533">
    <property type="component" value="Chromosome"/>
</dbReference>
<dbReference type="GO" id="GO:0031676">
    <property type="term" value="C:plasma membrane-derived thylakoid membrane"/>
    <property type="evidence" value="ECO:0007669"/>
    <property type="project" value="UniProtKB-SubCell"/>
</dbReference>
<dbReference type="GO" id="GO:0008137">
    <property type="term" value="F:NADH dehydrogenase (ubiquinone) activity"/>
    <property type="evidence" value="ECO:0007669"/>
    <property type="project" value="InterPro"/>
</dbReference>
<dbReference type="GO" id="GO:0048038">
    <property type="term" value="F:quinone binding"/>
    <property type="evidence" value="ECO:0007669"/>
    <property type="project" value="UniProtKB-KW"/>
</dbReference>
<dbReference type="GO" id="GO:0019684">
    <property type="term" value="P:photosynthesis, light reaction"/>
    <property type="evidence" value="ECO:0007669"/>
    <property type="project" value="UniProtKB-UniRule"/>
</dbReference>
<dbReference type="Gene3D" id="3.30.460.80">
    <property type="entry name" value="NADH:ubiquinone oxidoreductase, 30kDa subunit"/>
    <property type="match status" value="1"/>
</dbReference>
<dbReference type="HAMAP" id="MF_01357">
    <property type="entry name" value="NDH1_NuoC"/>
    <property type="match status" value="1"/>
</dbReference>
<dbReference type="InterPro" id="IPR010218">
    <property type="entry name" value="NADH_DH_suC"/>
</dbReference>
<dbReference type="InterPro" id="IPR037232">
    <property type="entry name" value="NADH_quin_OxRdtase_su_C/D-like"/>
</dbReference>
<dbReference type="InterPro" id="IPR001268">
    <property type="entry name" value="NADH_UbQ_OxRdtase_30kDa_su"/>
</dbReference>
<dbReference type="InterPro" id="IPR020396">
    <property type="entry name" value="NADH_UbQ_OxRdtase_CS"/>
</dbReference>
<dbReference type="NCBIfam" id="NF009141">
    <property type="entry name" value="PRK12494.1"/>
    <property type="match status" value="1"/>
</dbReference>
<dbReference type="PANTHER" id="PTHR10884:SF14">
    <property type="entry name" value="NADH DEHYDROGENASE [UBIQUINONE] IRON-SULFUR PROTEIN 3, MITOCHONDRIAL"/>
    <property type="match status" value="1"/>
</dbReference>
<dbReference type="PANTHER" id="PTHR10884">
    <property type="entry name" value="NADH DEHYDROGENASE UBIQUINONE IRON-SULFUR PROTEIN 3"/>
    <property type="match status" value="1"/>
</dbReference>
<dbReference type="Pfam" id="PF00329">
    <property type="entry name" value="Complex1_30kDa"/>
    <property type="match status" value="1"/>
</dbReference>
<dbReference type="SUPFAM" id="SSF143243">
    <property type="entry name" value="Nqo5-like"/>
    <property type="match status" value="1"/>
</dbReference>
<dbReference type="PROSITE" id="PS00542">
    <property type="entry name" value="COMPLEX1_30K"/>
    <property type="match status" value="1"/>
</dbReference>
<sequence>MADEELKPVPAAAEAIVPSGPTSQWLTENGFAHESLAADKNGVEIIKVEPDFLLPIATALYAYGFNYLQFQGGIDLGPGQDLVSVYHLVKVSDNADKPEEVRVKVFLPRENPVVPSVYWIWKTADWQERESYDMFGIIYEGHPNLKRILMPEDWVGWPLRKDYISPDFYELQDAY</sequence>
<proteinExistence type="inferred from homology"/>
<reference key="1">
    <citation type="submission" date="1998-10" db="EMBL/GenBank/DDBJ databases">
        <title>Isolation and characterisation of the ndhCKJ gene-cluster of Anabaena variabilis.</title>
        <authorList>
            <person name="Happe T."/>
            <person name="Schiefer W."/>
            <person name="Boehme H."/>
        </authorList>
    </citation>
    <scope>NUCLEOTIDE SEQUENCE [GENOMIC DNA]</scope>
</reference>
<reference key="2">
    <citation type="journal article" date="2014" name="Stand. Genomic Sci.">
        <title>Complete genome sequence of Anabaena variabilis ATCC 29413.</title>
        <authorList>
            <person name="Thiel T."/>
            <person name="Pratte B.S."/>
            <person name="Zhong J."/>
            <person name="Goodwin L."/>
            <person name="Copeland A."/>
            <person name="Lucas S."/>
            <person name="Han C."/>
            <person name="Pitluck S."/>
            <person name="Land M.L."/>
            <person name="Kyrpides N.C."/>
            <person name="Woyke T."/>
        </authorList>
    </citation>
    <scope>NUCLEOTIDE SEQUENCE [LARGE SCALE GENOMIC DNA]</scope>
    <source>
        <strain>ATCC 29413 / PCC 7937</strain>
    </source>
</reference>
<protein>
    <recommendedName>
        <fullName evidence="1">NAD(P)H-quinone oxidoreductase subunit J</fullName>
        <ecNumber evidence="1">7.1.1.-</ecNumber>
    </recommendedName>
    <alternativeName>
        <fullName>NAD(P)H dehydrogenase subunit J</fullName>
    </alternativeName>
    <alternativeName>
        <fullName evidence="1">NADH-plastoquinone oxidoreductase subunit J</fullName>
    </alternativeName>
    <alternativeName>
        <fullName evidence="1">NDH-1 subunit J</fullName>
        <shortName evidence="1">NDH-J</shortName>
    </alternativeName>
</protein>
<gene>
    <name evidence="1" type="primary">ndhJ</name>
    <name type="ordered locus">Ava_1860</name>
</gene>
<accession>Q9XBL6</accession>
<accession>Q3MC04</accession>
<comment type="function">
    <text evidence="1">NDH-1 shuttles electrons from an unknown electron donor, via FMN and iron-sulfur (Fe-S) centers, to quinones in the respiratory and/or the photosynthetic chain. The immediate electron acceptor for the enzyme in this species is believed to be plastoquinone. Couples the redox reaction to proton translocation, and thus conserves the redox energy in a proton gradient. Cyanobacterial NDH-1 also plays a role in inorganic carbon-concentration.</text>
</comment>
<comment type="catalytic activity">
    <reaction evidence="1">
        <text>a plastoquinone + NADH + (n+1) H(+)(in) = a plastoquinol + NAD(+) + n H(+)(out)</text>
        <dbReference type="Rhea" id="RHEA:42608"/>
        <dbReference type="Rhea" id="RHEA-COMP:9561"/>
        <dbReference type="Rhea" id="RHEA-COMP:9562"/>
        <dbReference type="ChEBI" id="CHEBI:15378"/>
        <dbReference type="ChEBI" id="CHEBI:17757"/>
        <dbReference type="ChEBI" id="CHEBI:57540"/>
        <dbReference type="ChEBI" id="CHEBI:57945"/>
        <dbReference type="ChEBI" id="CHEBI:62192"/>
    </reaction>
</comment>
<comment type="catalytic activity">
    <reaction evidence="1">
        <text>a plastoquinone + NADPH + (n+1) H(+)(in) = a plastoquinol + NADP(+) + n H(+)(out)</text>
        <dbReference type="Rhea" id="RHEA:42612"/>
        <dbReference type="Rhea" id="RHEA-COMP:9561"/>
        <dbReference type="Rhea" id="RHEA-COMP:9562"/>
        <dbReference type="ChEBI" id="CHEBI:15378"/>
        <dbReference type="ChEBI" id="CHEBI:17757"/>
        <dbReference type="ChEBI" id="CHEBI:57783"/>
        <dbReference type="ChEBI" id="CHEBI:58349"/>
        <dbReference type="ChEBI" id="CHEBI:62192"/>
    </reaction>
</comment>
<comment type="subunit">
    <text evidence="1">NDH-1 can be composed of about 15 different subunits; different subcomplexes with different compositions have been identified which probably have different functions.</text>
</comment>
<comment type="subcellular location">
    <subcellularLocation>
        <location evidence="1">Cellular thylakoid membrane</location>
        <topology evidence="1">Peripheral membrane protein</topology>
        <orientation evidence="1">Cytoplasmic side</orientation>
    </subcellularLocation>
</comment>
<comment type="similarity">
    <text evidence="1">Belongs to the complex I 30 kDa subunit family.</text>
</comment>
<name>NDHJ_TRIV2</name>
<feature type="chain" id="PRO_0000118666" description="NAD(P)H-quinone oxidoreductase subunit J">
    <location>
        <begin position="1"/>
        <end position="175"/>
    </location>
</feature>
<feature type="sequence conflict" description="In Ref. 1; CAB45648." evidence="2" ref="1">
    <original>E</original>
    <variation>D</variation>
    <location>
        <position position="49"/>
    </location>
</feature>
<feature type="sequence conflict" description="In Ref. 1; CAB45648." evidence="2" ref="1">
    <original>GG</original>
    <variation>RR</variation>
    <location>
        <begin position="72"/>
        <end position="73"/>
    </location>
</feature>
<feature type="sequence conflict" description="In Ref. 1; CAB45648." evidence="2" ref="1">
    <original>G</original>
    <variation>R</variation>
    <location>
        <position position="77"/>
    </location>
</feature>
<feature type="sequence conflict" description="In Ref. 1; CAB45648." evidence="2" ref="1">
    <original>V</original>
    <variation>I</variation>
    <location>
        <position position="101"/>
    </location>
</feature>
<feature type="sequence conflict" description="In Ref. 1; CAB45648." evidence="2" ref="1">
    <original>W</original>
    <variation>G</variation>
    <location>
        <position position="121"/>
    </location>
</feature>
<feature type="sequence conflict" description="In Ref. 1; CAB45648." evidence="2" ref="1">
    <original>E</original>
    <variation>G</variation>
    <location>
        <position position="130"/>
    </location>
</feature>
<feature type="sequence conflict" description="In Ref. 1; CAB45648." evidence="2" ref="1">
    <original>F</original>
    <variation>V</variation>
    <location>
        <position position="135"/>
    </location>
</feature>
<feature type="sequence conflict" description="In Ref. 1; CAB45648." evidence="2" ref="1">
    <original>M</original>
    <variation>I</variation>
    <location>
        <position position="150"/>
    </location>
</feature>